<comment type="function">
    <text evidence="1">Binds to 23S rRNA.</text>
</comment>
<comment type="subunit">
    <text evidence="1">Part of the 50S ribosomal subunit.</text>
</comment>
<comment type="subcellular location">
    <subcellularLocation>
        <location>Plastid</location>
        <location>Chloroplast</location>
    </subcellularLocation>
</comment>
<comment type="similarity">
    <text evidence="1">Belongs to the universal ribosomal protein uL14 family.</text>
</comment>
<reference key="1">
    <citation type="journal article" date="2004" name="DNA Res.">
        <title>Complete nucleotide sequence of the sugarcane (Saccharum officinarum) chloroplast genome: a comparative analysis of four monocot chloroplast genomes.</title>
        <authorList>
            <person name="Asano T."/>
            <person name="Tsudzuki T."/>
            <person name="Takahashi S."/>
            <person name="Shimada H."/>
            <person name="Kadowaki K."/>
        </authorList>
    </citation>
    <scope>NUCLEOTIDE SEQUENCE [LARGE SCALE GENOMIC DNA]</scope>
</reference>
<geneLocation type="chloroplast"/>
<gene>
    <name evidence="1" type="primary">rpl14</name>
</gene>
<proteinExistence type="inferred from homology"/>
<keyword id="KW-0150">Chloroplast</keyword>
<keyword id="KW-0934">Plastid</keyword>
<keyword id="KW-0687">Ribonucleoprotein</keyword>
<keyword id="KW-0689">Ribosomal protein</keyword>
<keyword id="KW-0694">RNA-binding</keyword>
<keyword id="KW-0699">rRNA-binding</keyword>
<evidence type="ECO:0000255" key="1">
    <source>
        <dbReference type="HAMAP-Rule" id="MF_01367"/>
    </source>
</evidence>
<evidence type="ECO:0000305" key="2"/>
<feature type="chain" id="PRO_0000226929" description="Large ribosomal subunit protein uL14c">
    <location>
        <begin position="1"/>
        <end position="123"/>
    </location>
</feature>
<name>RK14_SACOF</name>
<sequence>MIQPQTLLNVADNSGARKLMCIRVIGAAGNQRYARIGDVIIAVIKDAVPQMPLERSEVIRAVIVRTRKEFKGDDGIIIRYDDNAAVIIDQKGNPKGTRVFGAVAEELRELNYTKIVSLAPEVL</sequence>
<protein>
    <recommendedName>
        <fullName evidence="1">Large ribosomal subunit protein uL14c</fullName>
    </recommendedName>
    <alternativeName>
        <fullName evidence="2">50S ribosomal protein L14, chloroplastic</fullName>
    </alternativeName>
</protein>
<organism>
    <name type="scientific">Saccharum officinarum</name>
    <name type="common">Sugarcane</name>
    <dbReference type="NCBI Taxonomy" id="4547"/>
    <lineage>
        <taxon>Eukaryota</taxon>
        <taxon>Viridiplantae</taxon>
        <taxon>Streptophyta</taxon>
        <taxon>Embryophyta</taxon>
        <taxon>Tracheophyta</taxon>
        <taxon>Spermatophyta</taxon>
        <taxon>Magnoliopsida</taxon>
        <taxon>Liliopsida</taxon>
        <taxon>Poales</taxon>
        <taxon>Poaceae</taxon>
        <taxon>PACMAD clade</taxon>
        <taxon>Panicoideae</taxon>
        <taxon>Andropogonodae</taxon>
        <taxon>Andropogoneae</taxon>
        <taxon>Saccharinae</taxon>
        <taxon>Saccharum</taxon>
        <taxon>Saccharum officinarum species complex</taxon>
    </lineage>
</organism>
<accession>Q6ENS7</accession>
<dbReference type="EMBL" id="AP006714">
    <property type="protein sequence ID" value="BAD27329.1"/>
    <property type="molecule type" value="Genomic_DNA"/>
</dbReference>
<dbReference type="RefSeq" id="YP_009389607.1">
    <property type="nucleotide sequence ID" value="NC_035224.1"/>
</dbReference>
<dbReference type="SMR" id="Q6ENS7"/>
<dbReference type="GeneID" id="33347855"/>
<dbReference type="GO" id="GO:0009507">
    <property type="term" value="C:chloroplast"/>
    <property type="evidence" value="ECO:0007669"/>
    <property type="project" value="UniProtKB-SubCell"/>
</dbReference>
<dbReference type="GO" id="GO:0022625">
    <property type="term" value="C:cytosolic large ribosomal subunit"/>
    <property type="evidence" value="ECO:0007669"/>
    <property type="project" value="TreeGrafter"/>
</dbReference>
<dbReference type="GO" id="GO:0070180">
    <property type="term" value="F:large ribosomal subunit rRNA binding"/>
    <property type="evidence" value="ECO:0007669"/>
    <property type="project" value="TreeGrafter"/>
</dbReference>
<dbReference type="GO" id="GO:0003735">
    <property type="term" value="F:structural constituent of ribosome"/>
    <property type="evidence" value="ECO:0007669"/>
    <property type="project" value="InterPro"/>
</dbReference>
<dbReference type="GO" id="GO:0006412">
    <property type="term" value="P:translation"/>
    <property type="evidence" value="ECO:0007669"/>
    <property type="project" value="UniProtKB-UniRule"/>
</dbReference>
<dbReference type="CDD" id="cd00337">
    <property type="entry name" value="Ribosomal_uL14"/>
    <property type="match status" value="1"/>
</dbReference>
<dbReference type="FunFam" id="2.40.150.20:FF:000002">
    <property type="entry name" value="50S ribosomal protein L14, chloroplastic"/>
    <property type="match status" value="1"/>
</dbReference>
<dbReference type="Gene3D" id="2.40.150.20">
    <property type="entry name" value="Ribosomal protein L14"/>
    <property type="match status" value="1"/>
</dbReference>
<dbReference type="HAMAP" id="MF_01367">
    <property type="entry name" value="Ribosomal_uL14"/>
    <property type="match status" value="1"/>
</dbReference>
<dbReference type="InterPro" id="IPR000218">
    <property type="entry name" value="Ribosomal_uL14"/>
</dbReference>
<dbReference type="InterPro" id="IPR005745">
    <property type="entry name" value="Ribosomal_uL14_bac-type"/>
</dbReference>
<dbReference type="InterPro" id="IPR019972">
    <property type="entry name" value="Ribosomal_uL14_CS"/>
</dbReference>
<dbReference type="InterPro" id="IPR036853">
    <property type="entry name" value="Ribosomal_uL14_sf"/>
</dbReference>
<dbReference type="NCBIfam" id="TIGR01067">
    <property type="entry name" value="rplN_bact"/>
    <property type="match status" value="1"/>
</dbReference>
<dbReference type="PANTHER" id="PTHR11761">
    <property type="entry name" value="50S/60S RIBOSOMAL PROTEIN L14/L23"/>
    <property type="match status" value="1"/>
</dbReference>
<dbReference type="PANTHER" id="PTHR11761:SF3">
    <property type="entry name" value="LARGE RIBOSOMAL SUBUNIT PROTEIN UL14M"/>
    <property type="match status" value="1"/>
</dbReference>
<dbReference type="Pfam" id="PF00238">
    <property type="entry name" value="Ribosomal_L14"/>
    <property type="match status" value="1"/>
</dbReference>
<dbReference type="SMART" id="SM01374">
    <property type="entry name" value="Ribosomal_L14"/>
    <property type="match status" value="1"/>
</dbReference>
<dbReference type="SUPFAM" id="SSF50193">
    <property type="entry name" value="Ribosomal protein L14"/>
    <property type="match status" value="1"/>
</dbReference>
<dbReference type="PROSITE" id="PS00049">
    <property type="entry name" value="RIBOSOMAL_L14"/>
    <property type="match status" value="1"/>
</dbReference>